<proteinExistence type="inferred from homology"/>
<accession>Q21RZ7</accession>
<sequence length="384" mass="41952">MNKRHSGQRVVVGLSGGVDSAVTAWLLKQQGYEVIGIFMKNWEDDDDSEYCSSNVDFIDAAAVADVIGIEIEHVNFAAEYKDRVFAEFLREYQAGRTPNPDILCNAEIKFKAFLDHALRLGAQKIATGHYARVRCVAADGRVLDAAQAQMSDGRFELLKGLDPSKDQSYFLHRLNQAQLSKTLFPVGELLKTEVRRLALEIGLPNAKKKDSTGICFIGERPFRDFLNRYIAREPGPIKDDKGRTIGQHVGLSFYTLGQRQGLGIGGLKAKGAQRGGGEHAPWFVARKDLATNTLWVVQGHEHPWLQSHGLSAQDASWVAGTAPQAGRFSAKTRYRQLDAPCTLAAGAGAAFHLSFPEPQWAVTPGQSAVLYDDEVCLGGGVIAA</sequence>
<organism>
    <name type="scientific">Albidiferax ferrireducens (strain ATCC BAA-621 / DSM 15236 / T118)</name>
    <name type="common">Rhodoferax ferrireducens</name>
    <dbReference type="NCBI Taxonomy" id="338969"/>
    <lineage>
        <taxon>Bacteria</taxon>
        <taxon>Pseudomonadati</taxon>
        <taxon>Pseudomonadota</taxon>
        <taxon>Betaproteobacteria</taxon>
        <taxon>Burkholderiales</taxon>
        <taxon>Comamonadaceae</taxon>
        <taxon>Rhodoferax</taxon>
    </lineage>
</organism>
<feature type="chain" id="PRO_1000009562" description="tRNA-specific 2-thiouridylase MnmA">
    <location>
        <begin position="1"/>
        <end position="384"/>
    </location>
</feature>
<feature type="region of interest" description="Interaction with target base in tRNA" evidence="1">
    <location>
        <begin position="99"/>
        <end position="101"/>
    </location>
</feature>
<feature type="region of interest" description="Interaction with tRNA" evidence="1">
    <location>
        <begin position="165"/>
        <end position="167"/>
    </location>
</feature>
<feature type="region of interest" description="Interaction with tRNA" evidence="1">
    <location>
        <begin position="333"/>
        <end position="334"/>
    </location>
</feature>
<feature type="active site" description="Nucleophile" evidence="1">
    <location>
        <position position="104"/>
    </location>
</feature>
<feature type="active site" description="Cysteine persulfide intermediate" evidence="1">
    <location>
        <position position="215"/>
    </location>
</feature>
<feature type="binding site" evidence="1">
    <location>
        <begin position="13"/>
        <end position="20"/>
    </location>
    <ligand>
        <name>ATP</name>
        <dbReference type="ChEBI" id="CHEBI:30616"/>
    </ligand>
</feature>
<feature type="binding site" evidence="1">
    <location>
        <position position="39"/>
    </location>
    <ligand>
        <name>ATP</name>
        <dbReference type="ChEBI" id="CHEBI:30616"/>
    </ligand>
</feature>
<feature type="binding site" evidence="1">
    <location>
        <position position="128"/>
    </location>
    <ligand>
        <name>ATP</name>
        <dbReference type="ChEBI" id="CHEBI:30616"/>
    </ligand>
</feature>
<feature type="site" description="Interaction with tRNA" evidence="1">
    <location>
        <position position="129"/>
    </location>
</feature>
<feature type="site" description="Interaction with tRNA" evidence="1">
    <location>
        <position position="366"/>
    </location>
</feature>
<feature type="disulfide bond" description="Alternate" evidence="1">
    <location>
        <begin position="104"/>
        <end position="215"/>
    </location>
</feature>
<name>MNMA_ALBFT</name>
<reference key="1">
    <citation type="submission" date="2006-02" db="EMBL/GenBank/DDBJ databases">
        <title>Complete sequence of chromosome of Rhodoferax ferrireducens DSM 15236.</title>
        <authorList>
            <person name="Copeland A."/>
            <person name="Lucas S."/>
            <person name="Lapidus A."/>
            <person name="Barry K."/>
            <person name="Detter J.C."/>
            <person name="Glavina del Rio T."/>
            <person name="Hammon N."/>
            <person name="Israni S."/>
            <person name="Pitluck S."/>
            <person name="Brettin T."/>
            <person name="Bruce D."/>
            <person name="Han C."/>
            <person name="Tapia R."/>
            <person name="Gilna P."/>
            <person name="Kiss H."/>
            <person name="Schmutz J."/>
            <person name="Larimer F."/>
            <person name="Land M."/>
            <person name="Kyrpides N."/>
            <person name="Ivanova N."/>
            <person name="Richardson P."/>
        </authorList>
    </citation>
    <scope>NUCLEOTIDE SEQUENCE [LARGE SCALE GENOMIC DNA]</scope>
    <source>
        <strain>ATCC BAA-621 / DSM 15236 / T118</strain>
    </source>
</reference>
<comment type="function">
    <text evidence="1">Catalyzes the 2-thiolation of uridine at the wobble position (U34) of tRNA, leading to the formation of s(2)U34.</text>
</comment>
<comment type="catalytic activity">
    <reaction evidence="1">
        <text>S-sulfanyl-L-cysteinyl-[protein] + uridine(34) in tRNA + AH2 + ATP = 2-thiouridine(34) in tRNA + L-cysteinyl-[protein] + A + AMP + diphosphate + H(+)</text>
        <dbReference type="Rhea" id="RHEA:47032"/>
        <dbReference type="Rhea" id="RHEA-COMP:10131"/>
        <dbReference type="Rhea" id="RHEA-COMP:11726"/>
        <dbReference type="Rhea" id="RHEA-COMP:11727"/>
        <dbReference type="Rhea" id="RHEA-COMP:11728"/>
        <dbReference type="ChEBI" id="CHEBI:13193"/>
        <dbReference type="ChEBI" id="CHEBI:15378"/>
        <dbReference type="ChEBI" id="CHEBI:17499"/>
        <dbReference type="ChEBI" id="CHEBI:29950"/>
        <dbReference type="ChEBI" id="CHEBI:30616"/>
        <dbReference type="ChEBI" id="CHEBI:33019"/>
        <dbReference type="ChEBI" id="CHEBI:61963"/>
        <dbReference type="ChEBI" id="CHEBI:65315"/>
        <dbReference type="ChEBI" id="CHEBI:87170"/>
        <dbReference type="ChEBI" id="CHEBI:456215"/>
        <dbReference type="EC" id="2.8.1.13"/>
    </reaction>
</comment>
<comment type="subcellular location">
    <subcellularLocation>
        <location evidence="1">Cytoplasm</location>
    </subcellularLocation>
</comment>
<comment type="similarity">
    <text evidence="1">Belongs to the MnmA/TRMU family.</text>
</comment>
<keyword id="KW-0067">ATP-binding</keyword>
<keyword id="KW-0963">Cytoplasm</keyword>
<keyword id="KW-1015">Disulfide bond</keyword>
<keyword id="KW-0547">Nucleotide-binding</keyword>
<keyword id="KW-1185">Reference proteome</keyword>
<keyword id="KW-0694">RNA-binding</keyword>
<keyword id="KW-0808">Transferase</keyword>
<keyword id="KW-0819">tRNA processing</keyword>
<keyword id="KW-0820">tRNA-binding</keyword>
<gene>
    <name evidence="1" type="primary">mnmA</name>
    <name type="synonym">trmU</name>
    <name type="ordered locus">Rfer_3756</name>
</gene>
<evidence type="ECO:0000255" key="1">
    <source>
        <dbReference type="HAMAP-Rule" id="MF_00144"/>
    </source>
</evidence>
<protein>
    <recommendedName>
        <fullName evidence="1">tRNA-specific 2-thiouridylase MnmA</fullName>
        <ecNumber evidence="1">2.8.1.13</ecNumber>
    </recommendedName>
</protein>
<dbReference type="EC" id="2.8.1.13" evidence="1"/>
<dbReference type="EMBL" id="CP000267">
    <property type="protein sequence ID" value="ABD71456.1"/>
    <property type="molecule type" value="Genomic_DNA"/>
</dbReference>
<dbReference type="RefSeq" id="WP_011466019.1">
    <property type="nucleotide sequence ID" value="NC_007908.1"/>
</dbReference>
<dbReference type="SMR" id="Q21RZ7"/>
<dbReference type="STRING" id="338969.Rfer_3756"/>
<dbReference type="KEGG" id="rfr:Rfer_3756"/>
<dbReference type="eggNOG" id="COG0482">
    <property type="taxonomic scope" value="Bacteria"/>
</dbReference>
<dbReference type="HOGENOM" id="CLU_035188_1_0_4"/>
<dbReference type="OrthoDB" id="9800696at2"/>
<dbReference type="Proteomes" id="UP000008332">
    <property type="component" value="Chromosome"/>
</dbReference>
<dbReference type="GO" id="GO:0005737">
    <property type="term" value="C:cytoplasm"/>
    <property type="evidence" value="ECO:0007669"/>
    <property type="project" value="UniProtKB-SubCell"/>
</dbReference>
<dbReference type="GO" id="GO:0005524">
    <property type="term" value="F:ATP binding"/>
    <property type="evidence" value="ECO:0007669"/>
    <property type="project" value="UniProtKB-KW"/>
</dbReference>
<dbReference type="GO" id="GO:0000049">
    <property type="term" value="F:tRNA binding"/>
    <property type="evidence" value="ECO:0007669"/>
    <property type="project" value="UniProtKB-KW"/>
</dbReference>
<dbReference type="GO" id="GO:0103016">
    <property type="term" value="F:tRNA-uridine 2-sulfurtransferase activity"/>
    <property type="evidence" value="ECO:0007669"/>
    <property type="project" value="UniProtKB-EC"/>
</dbReference>
<dbReference type="GO" id="GO:0002143">
    <property type="term" value="P:tRNA wobble position uridine thiolation"/>
    <property type="evidence" value="ECO:0007669"/>
    <property type="project" value="TreeGrafter"/>
</dbReference>
<dbReference type="CDD" id="cd01998">
    <property type="entry name" value="MnmA_TRMU-like"/>
    <property type="match status" value="1"/>
</dbReference>
<dbReference type="FunFam" id="2.30.30.280:FF:000001">
    <property type="entry name" value="tRNA-specific 2-thiouridylase MnmA"/>
    <property type="match status" value="1"/>
</dbReference>
<dbReference type="FunFam" id="2.40.30.10:FF:000023">
    <property type="entry name" value="tRNA-specific 2-thiouridylase MnmA"/>
    <property type="match status" value="1"/>
</dbReference>
<dbReference type="FunFam" id="3.40.50.620:FF:000004">
    <property type="entry name" value="tRNA-specific 2-thiouridylase MnmA"/>
    <property type="match status" value="1"/>
</dbReference>
<dbReference type="Gene3D" id="2.30.30.280">
    <property type="entry name" value="Adenine nucleotide alpha hydrolases-like domains"/>
    <property type="match status" value="1"/>
</dbReference>
<dbReference type="Gene3D" id="3.40.50.620">
    <property type="entry name" value="HUPs"/>
    <property type="match status" value="1"/>
</dbReference>
<dbReference type="Gene3D" id="2.40.30.10">
    <property type="entry name" value="Translation factors"/>
    <property type="match status" value="1"/>
</dbReference>
<dbReference type="HAMAP" id="MF_00144">
    <property type="entry name" value="tRNA_thiouridyl_MnmA"/>
    <property type="match status" value="1"/>
</dbReference>
<dbReference type="InterPro" id="IPR004506">
    <property type="entry name" value="MnmA-like"/>
</dbReference>
<dbReference type="InterPro" id="IPR046885">
    <property type="entry name" value="MnmA-like_C"/>
</dbReference>
<dbReference type="InterPro" id="IPR046884">
    <property type="entry name" value="MnmA-like_central"/>
</dbReference>
<dbReference type="InterPro" id="IPR023382">
    <property type="entry name" value="MnmA-like_central_sf"/>
</dbReference>
<dbReference type="InterPro" id="IPR014729">
    <property type="entry name" value="Rossmann-like_a/b/a_fold"/>
</dbReference>
<dbReference type="NCBIfam" id="NF001138">
    <property type="entry name" value="PRK00143.1"/>
    <property type="match status" value="1"/>
</dbReference>
<dbReference type="NCBIfam" id="TIGR00420">
    <property type="entry name" value="trmU"/>
    <property type="match status" value="1"/>
</dbReference>
<dbReference type="PANTHER" id="PTHR11933:SF5">
    <property type="entry name" value="MITOCHONDRIAL TRNA-SPECIFIC 2-THIOURIDYLASE 1"/>
    <property type="match status" value="1"/>
</dbReference>
<dbReference type="PANTHER" id="PTHR11933">
    <property type="entry name" value="TRNA 5-METHYLAMINOMETHYL-2-THIOURIDYLATE -METHYLTRANSFERASE"/>
    <property type="match status" value="1"/>
</dbReference>
<dbReference type="Pfam" id="PF03054">
    <property type="entry name" value="tRNA_Me_trans"/>
    <property type="match status" value="1"/>
</dbReference>
<dbReference type="Pfam" id="PF20258">
    <property type="entry name" value="tRNA_Me_trans_C"/>
    <property type="match status" value="1"/>
</dbReference>
<dbReference type="Pfam" id="PF20259">
    <property type="entry name" value="tRNA_Me_trans_M"/>
    <property type="match status" value="1"/>
</dbReference>
<dbReference type="SUPFAM" id="SSF52402">
    <property type="entry name" value="Adenine nucleotide alpha hydrolases-like"/>
    <property type="match status" value="1"/>
</dbReference>